<keyword id="KW-0030">Aminoacyl-tRNA synthetase</keyword>
<keyword id="KW-0067">ATP-binding</keyword>
<keyword id="KW-0963">Cytoplasm</keyword>
<keyword id="KW-0436">Ligase</keyword>
<keyword id="KW-0547">Nucleotide-binding</keyword>
<keyword id="KW-0648">Protein biosynthesis</keyword>
<keyword id="KW-1185">Reference proteome</keyword>
<proteinExistence type="inferred from homology"/>
<dbReference type="EC" id="6.1.1.14" evidence="1"/>
<dbReference type="EMBL" id="CP000698">
    <property type="protein sequence ID" value="ABQ27825.1"/>
    <property type="molecule type" value="Genomic_DNA"/>
</dbReference>
<dbReference type="RefSeq" id="WP_011940478.1">
    <property type="nucleotide sequence ID" value="NC_009483.1"/>
</dbReference>
<dbReference type="SMR" id="A5G7Q7"/>
<dbReference type="STRING" id="351605.Gura_3672"/>
<dbReference type="KEGG" id="gur:Gura_3672"/>
<dbReference type="HOGENOM" id="CLU_007220_2_2_7"/>
<dbReference type="OrthoDB" id="9775440at2"/>
<dbReference type="Proteomes" id="UP000006695">
    <property type="component" value="Chromosome"/>
</dbReference>
<dbReference type="GO" id="GO:0005829">
    <property type="term" value="C:cytosol"/>
    <property type="evidence" value="ECO:0007669"/>
    <property type="project" value="TreeGrafter"/>
</dbReference>
<dbReference type="GO" id="GO:0004814">
    <property type="term" value="F:arginine-tRNA ligase activity"/>
    <property type="evidence" value="ECO:0007669"/>
    <property type="project" value="InterPro"/>
</dbReference>
<dbReference type="GO" id="GO:0005524">
    <property type="term" value="F:ATP binding"/>
    <property type="evidence" value="ECO:0007669"/>
    <property type="project" value="UniProtKB-UniRule"/>
</dbReference>
<dbReference type="GO" id="GO:0004820">
    <property type="term" value="F:glycine-tRNA ligase activity"/>
    <property type="evidence" value="ECO:0007669"/>
    <property type="project" value="UniProtKB-UniRule"/>
</dbReference>
<dbReference type="GO" id="GO:0006420">
    <property type="term" value="P:arginyl-tRNA aminoacylation"/>
    <property type="evidence" value="ECO:0007669"/>
    <property type="project" value="InterPro"/>
</dbReference>
<dbReference type="GO" id="GO:0006426">
    <property type="term" value="P:glycyl-tRNA aminoacylation"/>
    <property type="evidence" value="ECO:0007669"/>
    <property type="project" value="UniProtKB-UniRule"/>
</dbReference>
<dbReference type="HAMAP" id="MF_00255">
    <property type="entry name" value="Gly_tRNA_synth_beta"/>
    <property type="match status" value="1"/>
</dbReference>
<dbReference type="InterPro" id="IPR008909">
    <property type="entry name" value="DALR_anticod-bd"/>
</dbReference>
<dbReference type="InterPro" id="IPR015944">
    <property type="entry name" value="Gly-tRNA-synth_bsu"/>
</dbReference>
<dbReference type="InterPro" id="IPR006194">
    <property type="entry name" value="Gly-tRNA-synth_heterodimer"/>
</dbReference>
<dbReference type="NCBIfam" id="TIGR00211">
    <property type="entry name" value="glyS"/>
    <property type="match status" value="1"/>
</dbReference>
<dbReference type="PANTHER" id="PTHR30075:SF2">
    <property type="entry name" value="GLYCINE--TRNA LIGASE, CHLOROPLASTIC_MITOCHONDRIAL 2"/>
    <property type="match status" value="1"/>
</dbReference>
<dbReference type="PANTHER" id="PTHR30075">
    <property type="entry name" value="GLYCYL-TRNA SYNTHETASE"/>
    <property type="match status" value="1"/>
</dbReference>
<dbReference type="Pfam" id="PF05746">
    <property type="entry name" value="DALR_1"/>
    <property type="match status" value="1"/>
</dbReference>
<dbReference type="Pfam" id="PF02092">
    <property type="entry name" value="tRNA_synt_2f"/>
    <property type="match status" value="1"/>
</dbReference>
<dbReference type="PRINTS" id="PR01045">
    <property type="entry name" value="TRNASYNTHGB"/>
</dbReference>
<dbReference type="SUPFAM" id="SSF109604">
    <property type="entry name" value="HD-domain/PDEase-like"/>
    <property type="match status" value="1"/>
</dbReference>
<dbReference type="PROSITE" id="PS50861">
    <property type="entry name" value="AA_TRNA_LIGASE_II_GLYAB"/>
    <property type="match status" value="1"/>
</dbReference>
<reference key="1">
    <citation type="submission" date="2007-05" db="EMBL/GenBank/DDBJ databases">
        <title>Complete sequence of Geobacter uraniireducens Rf4.</title>
        <authorList>
            <consortium name="US DOE Joint Genome Institute"/>
            <person name="Copeland A."/>
            <person name="Lucas S."/>
            <person name="Lapidus A."/>
            <person name="Barry K."/>
            <person name="Detter J.C."/>
            <person name="Glavina del Rio T."/>
            <person name="Hammon N."/>
            <person name="Israni S."/>
            <person name="Dalin E."/>
            <person name="Tice H."/>
            <person name="Pitluck S."/>
            <person name="Chertkov O."/>
            <person name="Brettin T."/>
            <person name="Bruce D."/>
            <person name="Han C."/>
            <person name="Schmutz J."/>
            <person name="Larimer F."/>
            <person name="Land M."/>
            <person name="Hauser L."/>
            <person name="Kyrpides N."/>
            <person name="Mikhailova N."/>
            <person name="Shelobolina E."/>
            <person name="Aklujkar M."/>
            <person name="Lovley D."/>
            <person name="Richardson P."/>
        </authorList>
    </citation>
    <scope>NUCLEOTIDE SEQUENCE [LARGE SCALE GENOMIC DNA]</scope>
    <source>
        <strain>ATCC BAA-1134 / JCM 13001 / Rf4</strain>
    </source>
</reference>
<feature type="chain" id="PRO_1000078542" description="Glycine--tRNA ligase beta subunit">
    <location>
        <begin position="1"/>
        <end position="688"/>
    </location>
</feature>
<organism>
    <name type="scientific">Geotalea uraniireducens (strain Rf4)</name>
    <name type="common">Geobacter uraniireducens</name>
    <dbReference type="NCBI Taxonomy" id="351605"/>
    <lineage>
        <taxon>Bacteria</taxon>
        <taxon>Pseudomonadati</taxon>
        <taxon>Thermodesulfobacteriota</taxon>
        <taxon>Desulfuromonadia</taxon>
        <taxon>Geobacterales</taxon>
        <taxon>Geobacteraceae</taxon>
        <taxon>Geotalea</taxon>
    </lineage>
</organism>
<accession>A5G7Q7</accession>
<name>SYGB_GEOUR</name>
<sequence length="688" mass="75493">MTKELFLEIGTEEIPAGFLPKAMAEMEGLIRKELDNARIAFGEVKAMATPRRLALVVSQVAGQQADAEITAMGPAKKVAFNEDGTPTRAGEGFARGQGVEPSALSIVVTEKGEYVAVTKKETGVPTVGLLGEILPRLINNISFKKSMRWGDLDVRFARPVHWIVALFDGIVVPFSFGNIESGTMSRGHRFMANTSFPVRDFTHYLDECERHFVIPDPAKRKEIIRREIHRVAKAAGGRLLPDEGLLEQVTYLVEYPSAVHGTFSAEFLVVPREVLITSMREHQRYFSLVDDNGKLLPGFITINNTLTEDPSVVVKGNERVLRARLSDARFFFDEDKKVPLENRVESLKSVLYQAKLGTSYEKMERFRALAEGVAEELQPGLKEKVSQAATLCKADLVTGMVGEFPEVQGIMGREYAFLQGIDPGVANAIAEHYLPTQAGGELPASDIGAFVSIADKLDTICGCFSVGLIPTGSADPYALRRAALGIINIIVAKGYALQLTTLVSKALARLEGKLTRKKEEVFGDVMDFFQGRFVNLMTDRFPADVVDAVVAVSFDDLVDTAAKIEALAVFKKRPDFEPLAVAFKRVCNIVKGPVVVVGVNELDFEEDAEGTLHRAYHSVAGTVAAKVAERDYLAALTQIATLKGAVDDFFDNVMVMAEDERVRNNRLALLQEIKGLFRDIADFAKITA</sequence>
<comment type="catalytic activity">
    <reaction evidence="1">
        <text>tRNA(Gly) + glycine + ATP = glycyl-tRNA(Gly) + AMP + diphosphate</text>
        <dbReference type="Rhea" id="RHEA:16013"/>
        <dbReference type="Rhea" id="RHEA-COMP:9664"/>
        <dbReference type="Rhea" id="RHEA-COMP:9683"/>
        <dbReference type="ChEBI" id="CHEBI:30616"/>
        <dbReference type="ChEBI" id="CHEBI:33019"/>
        <dbReference type="ChEBI" id="CHEBI:57305"/>
        <dbReference type="ChEBI" id="CHEBI:78442"/>
        <dbReference type="ChEBI" id="CHEBI:78522"/>
        <dbReference type="ChEBI" id="CHEBI:456215"/>
        <dbReference type="EC" id="6.1.1.14"/>
    </reaction>
</comment>
<comment type="subunit">
    <text evidence="1">Tetramer of two alpha and two beta subunits.</text>
</comment>
<comment type="subcellular location">
    <subcellularLocation>
        <location evidence="1">Cytoplasm</location>
    </subcellularLocation>
</comment>
<comment type="similarity">
    <text evidence="1">Belongs to the class-II aminoacyl-tRNA synthetase family.</text>
</comment>
<protein>
    <recommendedName>
        <fullName evidence="1">Glycine--tRNA ligase beta subunit</fullName>
        <ecNumber evidence="1">6.1.1.14</ecNumber>
    </recommendedName>
    <alternativeName>
        <fullName evidence="1">Glycyl-tRNA synthetase beta subunit</fullName>
        <shortName evidence="1">GlyRS</shortName>
    </alternativeName>
</protein>
<evidence type="ECO:0000255" key="1">
    <source>
        <dbReference type="HAMAP-Rule" id="MF_00255"/>
    </source>
</evidence>
<gene>
    <name evidence="1" type="primary">glyS</name>
    <name type="ordered locus">Gura_3672</name>
</gene>